<keyword id="KW-0119">Carbohydrate metabolism</keyword>
<keyword id="KW-0963">Cytoplasm</keyword>
<keyword id="KW-0413">Isomerase</keyword>
<keyword id="KW-0684">Rhamnose metabolism</keyword>
<dbReference type="EC" id="5.1.3.32" evidence="1"/>
<dbReference type="EMBL" id="CP000738">
    <property type="protein sequence ID" value="ABR59088.1"/>
    <property type="molecule type" value="Genomic_DNA"/>
</dbReference>
<dbReference type="RefSeq" id="WP_011974439.1">
    <property type="nucleotide sequence ID" value="NC_009636.1"/>
</dbReference>
<dbReference type="RefSeq" id="YP_001325923.1">
    <property type="nucleotide sequence ID" value="NC_009636.1"/>
</dbReference>
<dbReference type="SMR" id="A6U608"/>
<dbReference type="STRING" id="366394.Smed_0229"/>
<dbReference type="GeneID" id="61613070"/>
<dbReference type="KEGG" id="smd:Smed_0229"/>
<dbReference type="PATRIC" id="fig|366394.8.peg.3295"/>
<dbReference type="eggNOG" id="COG3254">
    <property type="taxonomic scope" value="Bacteria"/>
</dbReference>
<dbReference type="HOGENOM" id="CLU_100689_2_0_5"/>
<dbReference type="OrthoDB" id="9799608at2"/>
<dbReference type="UniPathway" id="UPA00125"/>
<dbReference type="Proteomes" id="UP000001108">
    <property type="component" value="Chromosome"/>
</dbReference>
<dbReference type="GO" id="GO:0005737">
    <property type="term" value="C:cytoplasm"/>
    <property type="evidence" value="ECO:0007669"/>
    <property type="project" value="UniProtKB-SubCell"/>
</dbReference>
<dbReference type="GO" id="GO:0062192">
    <property type="term" value="F:L-rhamnose mutarotase activity"/>
    <property type="evidence" value="ECO:0007669"/>
    <property type="project" value="UniProtKB-EC"/>
</dbReference>
<dbReference type="GO" id="GO:0019301">
    <property type="term" value="P:rhamnose catabolic process"/>
    <property type="evidence" value="ECO:0007669"/>
    <property type="project" value="TreeGrafter"/>
</dbReference>
<dbReference type="Gene3D" id="3.30.70.100">
    <property type="match status" value="1"/>
</dbReference>
<dbReference type="HAMAP" id="MF_01663">
    <property type="entry name" value="L_rham_rotase"/>
    <property type="match status" value="1"/>
</dbReference>
<dbReference type="InterPro" id="IPR011008">
    <property type="entry name" value="Dimeric_a/b-barrel"/>
</dbReference>
<dbReference type="InterPro" id="IPR013448">
    <property type="entry name" value="L-rhamnose_mutarotase"/>
</dbReference>
<dbReference type="InterPro" id="IPR008000">
    <property type="entry name" value="Rham/fucose_mutarotase"/>
</dbReference>
<dbReference type="NCBIfam" id="TIGR02625">
    <property type="entry name" value="YiiL_rotase"/>
    <property type="match status" value="1"/>
</dbReference>
<dbReference type="PANTHER" id="PTHR34389">
    <property type="entry name" value="L-RHAMNOSE MUTAROTASE"/>
    <property type="match status" value="1"/>
</dbReference>
<dbReference type="PANTHER" id="PTHR34389:SF2">
    <property type="entry name" value="L-RHAMNOSE MUTAROTASE"/>
    <property type="match status" value="1"/>
</dbReference>
<dbReference type="Pfam" id="PF05336">
    <property type="entry name" value="rhaM"/>
    <property type="match status" value="1"/>
</dbReference>
<dbReference type="SUPFAM" id="SSF54909">
    <property type="entry name" value="Dimeric alpha+beta barrel"/>
    <property type="match status" value="1"/>
</dbReference>
<name>RHAM_SINMW</name>
<accession>A6U608</accession>
<proteinExistence type="inferred from homology"/>
<reference key="1">
    <citation type="submission" date="2007-06" db="EMBL/GenBank/DDBJ databases">
        <title>Complete sequence of Sinorhizobium medicae WSM419 chromosome.</title>
        <authorList>
            <consortium name="US DOE Joint Genome Institute"/>
            <person name="Copeland A."/>
            <person name="Lucas S."/>
            <person name="Lapidus A."/>
            <person name="Barry K."/>
            <person name="Glavina del Rio T."/>
            <person name="Dalin E."/>
            <person name="Tice H."/>
            <person name="Pitluck S."/>
            <person name="Chain P."/>
            <person name="Malfatti S."/>
            <person name="Shin M."/>
            <person name="Vergez L."/>
            <person name="Schmutz J."/>
            <person name="Larimer F."/>
            <person name="Land M."/>
            <person name="Hauser L."/>
            <person name="Kyrpides N."/>
            <person name="Mikhailova N."/>
            <person name="Reeve W.G."/>
            <person name="Richardson P."/>
        </authorList>
    </citation>
    <scope>NUCLEOTIDE SEQUENCE [LARGE SCALE GENOMIC DNA]</scope>
    <source>
        <strain>WSM419</strain>
    </source>
</reference>
<feature type="chain" id="PRO_0000344609" description="L-rhamnose mutarotase">
    <location>
        <begin position="1"/>
        <end position="104"/>
    </location>
</feature>
<feature type="active site" description="Proton donor" evidence="1">
    <location>
        <position position="22"/>
    </location>
</feature>
<feature type="binding site" evidence="1">
    <location>
        <position position="18"/>
    </location>
    <ligand>
        <name>substrate</name>
    </ligand>
</feature>
<feature type="binding site" evidence="1">
    <location>
        <position position="41"/>
    </location>
    <ligand>
        <name>substrate</name>
    </ligand>
</feature>
<feature type="binding site" evidence="1">
    <location>
        <begin position="76"/>
        <end position="77"/>
    </location>
    <ligand>
        <name>substrate</name>
    </ligand>
</feature>
<sequence length="104" mass="12087">MEKYAFRMRLHPGKAAEYQARHDAIRPELVALLKDAGISDYSIHLDEENDLLFGVLWRSDDHKMADLPSHPVMRKWWAHMADIMETHADNEPVAAPLKTVFHLR</sequence>
<protein>
    <recommendedName>
        <fullName evidence="1">L-rhamnose mutarotase</fullName>
        <ecNumber evidence="1">5.1.3.32</ecNumber>
    </recommendedName>
    <alternativeName>
        <fullName evidence="1">Rhamnose 1-epimerase</fullName>
    </alternativeName>
    <alternativeName>
        <fullName evidence="1">Type-3 mutarotase</fullName>
    </alternativeName>
</protein>
<evidence type="ECO:0000255" key="1">
    <source>
        <dbReference type="HAMAP-Rule" id="MF_01663"/>
    </source>
</evidence>
<gene>
    <name evidence="1" type="primary">rhaM</name>
    <name type="ordered locus">Smed_0229</name>
</gene>
<organism>
    <name type="scientific">Sinorhizobium medicae (strain WSM419)</name>
    <name type="common">Ensifer medicae</name>
    <dbReference type="NCBI Taxonomy" id="366394"/>
    <lineage>
        <taxon>Bacteria</taxon>
        <taxon>Pseudomonadati</taxon>
        <taxon>Pseudomonadota</taxon>
        <taxon>Alphaproteobacteria</taxon>
        <taxon>Hyphomicrobiales</taxon>
        <taxon>Rhizobiaceae</taxon>
        <taxon>Sinorhizobium/Ensifer group</taxon>
        <taxon>Sinorhizobium</taxon>
    </lineage>
</organism>
<comment type="function">
    <text evidence="1">Involved in the anomeric conversion of L-rhamnose.</text>
</comment>
<comment type="catalytic activity">
    <reaction evidence="1">
        <text>alpha-L-rhamnose = beta-L-rhamnose</text>
        <dbReference type="Rhea" id="RHEA:25584"/>
        <dbReference type="ChEBI" id="CHEBI:27586"/>
        <dbReference type="ChEBI" id="CHEBI:27907"/>
        <dbReference type="EC" id="5.1.3.32"/>
    </reaction>
</comment>
<comment type="pathway">
    <text evidence="1">Carbohydrate metabolism; L-rhamnose metabolism.</text>
</comment>
<comment type="subunit">
    <text evidence="1">Homodimer.</text>
</comment>
<comment type="subcellular location">
    <subcellularLocation>
        <location evidence="1">Cytoplasm</location>
    </subcellularLocation>
</comment>
<comment type="similarity">
    <text evidence="1">Belongs to the rhamnose mutarotase family.</text>
</comment>